<reference key="1">
    <citation type="journal article" date="1998" name="Nature">
        <title>The genome sequence of Rickettsia prowazekii and the origin of mitochondria.</title>
        <authorList>
            <person name="Andersson S.G.E."/>
            <person name="Zomorodipour A."/>
            <person name="Andersson J.O."/>
            <person name="Sicheritz-Ponten T."/>
            <person name="Alsmark U.C.M."/>
            <person name="Podowski R.M."/>
            <person name="Naeslund A.K."/>
            <person name="Eriksson A.-S."/>
            <person name="Winkler H.H."/>
            <person name="Kurland C.G."/>
        </authorList>
    </citation>
    <scope>NUCLEOTIDE SEQUENCE [LARGE SCALE GENOMIC DNA]</scope>
    <source>
        <strain>Madrid E</strain>
    </source>
</reference>
<organism>
    <name type="scientific">Rickettsia prowazekii (strain Madrid E)</name>
    <dbReference type="NCBI Taxonomy" id="272947"/>
    <lineage>
        <taxon>Bacteria</taxon>
        <taxon>Pseudomonadati</taxon>
        <taxon>Pseudomonadota</taxon>
        <taxon>Alphaproteobacteria</taxon>
        <taxon>Rickettsiales</taxon>
        <taxon>Rickettsiaceae</taxon>
        <taxon>Rickettsieae</taxon>
        <taxon>Rickettsia</taxon>
        <taxon>typhus group</taxon>
    </lineage>
</organism>
<name>RS21_RICPR</name>
<evidence type="ECO:0000305" key="1"/>
<gene>
    <name type="primary">rpsU</name>
    <name type="ordered locus">RP615</name>
</gene>
<dbReference type="EMBL" id="AJ235272">
    <property type="protein sequence ID" value="CAA15058.1"/>
    <property type="molecule type" value="Genomic_DNA"/>
</dbReference>
<dbReference type="PIR" id="H71666">
    <property type="entry name" value="H71666"/>
</dbReference>
<dbReference type="RefSeq" id="NP_220982.1">
    <property type="nucleotide sequence ID" value="NC_000963.1"/>
</dbReference>
<dbReference type="RefSeq" id="WP_004599167.1">
    <property type="nucleotide sequence ID" value="NC_000963.1"/>
</dbReference>
<dbReference type="SMR" id="Q9ZCU6"/>
<dbReference type="STRING" id="272947.gene:17555694"/>
<dbReference type="EnsemblBacteria" id="CAA15058">
    <property type="protein sequence ID" value="CAA15058"/>
    <property type="gene ID" value="CAA15058"/>
</dbReference>
<dbReference type="GeneID" id="57569740"/>
<dbReference type="KEGG" id="rpr:RP615"/>
<dbReference type="PATRIC" id="fig|272947.5.peg.634"/>
<dbReference type="eggNOG" id="COG0828">
    <property type="taxonomic scope" value="Bacteria"/>
</dbReference>
<dbReference type="HOGENOM" id="CLU_159258_0_2_5"/>
<dbReference type="OrthoDB" id="9811907at2"/>
<dbReference type="Proteomes" id="UP000002480">
    <property type="component" value="Chromosome"/>
</dbReference>
<dbReference type="GO" id="GO:1990904">
    <property type="term" value="C:ribonucleoprotein complex"/>
    <property type="evidence" value="ECO:0007669"/>
    <property type="project" value="UniProtKB-KW"/>
</dbReference>
<dbReference type="GO" id="GO:0005840">
    <property type="term" value="C:ribosome"/>
    <property type="evidence" value="ECO:0007669"/>
    <property type="project" value="UniProtKB-KW"/>
</dbReference>
<dbReference type="GO" id="GO:0003735">
    <property type="term" value="F:structural constituent of ribosome"/>
    <property type="evidence" value="ECO:0007669"/>
    <property type="project" value="InterPro"/>
</dbReference>
<dbReference type="GO" id="GO:0006412">
    <property type="term" value="P:translation"/>
    <property type="evidence" value="ECO:0007669"/>
    <property type="project" value="UniProtKB-UniRule"/>
</dbReference>
<dbReference type="Gene3D" id="1.20.5.1150">
    <property type="entry name" value="Ribosomal protein S8"/>
    <property type="match status" value="1"/>
</dbReference>
<dbReference type="HAMAP" id="MF_00358">
    <property type="entry name" value="Ribosomal_bS21"/>
    <property type="match status" value="1"/>
</dbReference>
<dbReference type="InterPro" id="IPR001911">
    <property type="entry name" value="Ribosomal_bS21"/>
</dbReference>
<dbReference type="InterPro" id="IPR038380">
    <property type="entry name" value="Ribosomal_bS21_sf"/>
</dbReference>
<dbReference type="NCBIfam" id="TIGR00030">
    <property type="entry name" value="S21p"/>
    <property type="match status" value="1"/>
</dbReference>
<dbReference type="Pfam" id="PF01165">
    <property type="entry name" value="Ribosomal_S21"/>
    <property type="match status" value="1"/>
</dbReference>
<comment type="similarity">
    <text evidence="1">Belongs to the bacterial ribosomal protein bS21 family.</text>
</comment>
<sequence>MILVNVHAGNCDNTLKNFKKKLQRELYFRKMKEQRYYETPSAKRVRKAQEAARRIRKFARKKMYEE</sequence>
<feature type="chain" id="PRO_0000178368" description="Small ribosomal subunit protein bS21">
    <location>
        <begin position="1"/>
        <end position="66"/>
    </location>
</feature>
<protein>
    <recommendedName>
        <fullName evidence="1">Small ribosomal subunit protein bS21</fullName>
    </recommendedName>
    <alternativeName>
        <fullName>30S ribosomal protein S21</fullName>
    </alternativeName>
</protein>
<accession>Q9ZCU6</accession>
<proteinExistence type="inferred from homology"/>
<keyword id="KW-1185">Reference proteome</keyword>
<keyword id="KW-0687">Ribonucleoprotein</keyword>
<keyword id="KW-0689">Ribosomal protein</keyword>